<dbReference type="EMBL" id="CP000802">
    <property type="protein sequence ID" value="ABV08148.1"/>
    <property type="molecule type" value="Genomic_DNA"/>
</dbReference>
<dbReference type="RefSeq" id="WP_001251965.1">
    <property type="nucleotide sequence ID" value="NC_009800.1"/>
</dbReference>
<dbReference type="SMR" id="A8A6J4"/>
<dbReference type="KEGG" id="ecx:EcHS_A3947"/>
<dbReference type="HOGENOM" id="CLU_084338_2_0_6"/>
<dbReference type="GO" id="GO:0005886">
    <property type="term" value="C:plasma membrane"/>
    <property type="evidence" value="ECO:0007669"/>
    <property type="project" value="UniProtKB-SubCell"/>
</dbReference>
<dbReference type="GO" id="GO:0045259">
    <property type="term" value="C:proton-transporting ATP synthase complex"/>
    <property type="evidence" value="ECO:0007669"/>
    <property type="project" value="UniProtKB-KW"/>
</dbReference>
<dbReference type="GO" id="GO:0005524">
    <property type="term" value="F:ATP binding"/>
    <property type="evidence" value="ECO:0007669"/>
    <property type="project" value="UniProtKB-UniRule"/>
</dbReference>
<dbReference type="GO" id="GO:0046933">
    <property type="term" value="F:proton-transporting ATP synthase activity, rotational mechanism"/>
    <property type="evidence" value="ECO:0007669"/>
    <property type="project" value="UniProtKB-UniRule"/>
</dbReference>
<dbReference type="CDD" id="cd12152">
    <property type="entry name" value="F1-ATPase_delta"/>
    <property type="match status" value="1"/>
</dbReference>
<dbReference type="FunFam" id="1.20.5.440:FF:000001">
    <property type="entry name" value="ATP synthase epsilon chain"/>
    <property type="match status" value="1"/>
</dbReference>
<dbReference type="FunFam" id="2.60.15.10:FF:000001">
    <property type="entry name" value="ATP synthase epsilon chain"/>
    <property type="match status" value="1"/>
</dbReference>
<dbReference type="Gene3D" id="1.20.5.440">
    <property type="entry name" value="ATP synthase delta/epsilon subunit, C-terminal domain"/>
    <property type="match status" value="1"/>
</dbReference>
<dbReference type="Gene3D" id="2.60.15.10">
    <property type="entry name" value="F0F1 ATP synthase delta/epsilon subunit, N-terminal"/>
    <property type="match status" value="1"/>
</dbReference>
<dbReference type="HAMAP" id="MF_00530">
    <property type="entry name" value="ATP_synth_epsil_bac"/>
    <property type="match status" value="1"/>
</dbReference>
<dbReference type="InterPro" id="IPR036794">
    <property type="entry name" value="ATP_F1_dsu/esu_C_sf"/>
</dbReference>
<dbReference type="InterPro" id="IPR001469">
    <property type="entry name" value="ATP_synth_F1_dsu/esu"/>
</dbReference>
<dbReference type="InterPro" id="IPR020546">
    <property type="entry name" value="ATP_synth_F1_dsu/esu_N"/>
</dbReference>
<dbReference type="InterPro" id="IPR020547">
    <property type="entry name" value="ATP_synth_F1_esu_C"/>
</dbReference>
<dbReference type="InterPro" id="IPR036771">
    <property type="entry name" value="ATPsynth_dsu/esu_N"/>
</dbReference>
<dbReference type="NCBIfam" id="TIGR01216">
    <property type="entry name" value="ATP_synt_epsi"/>
    <property type="match status" value="1"/>
</dbReference>
<dbReference type="NCBIfam" id="NF001847">
    <property type="entry name" value="PRK00571.1-4"/>
    <property type="match status" value="1"/>
</dbReference>
<dbReference type="PANTHER" id="PTHR13822">
    <property type="entry name" value="ATP SYNTHASE DELTA/EPSILON CHAIN"/>
    <property type="match status" value="1"/>
</dbReference>
<dbReference type="PANTHER" id="PTHR13822:SF10">
    <property type="entry name" value="ATP SYNTHASE EPSILON CHAIN, CHLOROPLASTIC"/>
    <property type="match status" value="1"/>
</dbReference>
<dbReference type="Pfam" id="PF00401">
    <property type="entry name" value="ATP-synt_DE"/>
    <property type="match status" value="1"/>
</dbReference>
<dbReference type="Pfam" id="PF02823">
    <property type="entry name" value="ATP-synt_DE_N"/>
    <property type="match status" value="1"/>
</dbReference>
<dbReference type="SUPFAM" id="SSF46604">
    <property type="entry name" value="Epsilon subunit of F1F0-ATP synthase C-terminal domain"/>
    <property type="match status" value="1"/>
</dbReference>
<dbReference type="SUPFAM" id="SSF51344">
    <property type="entry name" value="Epsilon subunit of F1F0-ATP synthase N-terminal domain"/>
    <property type="match status" value="1"/>
</dbReference>
<keyword id="KW-0066">ATP synthesis</keyword>
<keyword id="KW-0997">Cell inner membrane</keyword>
<keyword id="KW-1003">Cell membrane</keyword>
<keyword id="KW-0139">CF(1)</keyword>
<keyword id="KW-0375">Hydrogen ion transport</keyword>
<keyword id="KW-0406">Ion transport</keyword>
<keyword id="KW-0472">Membrane</keyword>
<keyword id="KW-0813">Transport</keyword>
<organism>
    <name type="scientific">Escherichia coli O9:H4 (strain HS)</name>
    <dbReference type="NCBI Taxonomy" id="331112"/>
    <lineage>
        <taxon>Bacteria</taxon>
        <taxon>Pseudomonadati</taxon>
        <taxon>Pseudomonadota</taxon>
        <taxon>Gammaproteobacteria</taxon>
        <taxon>Enterobacterales</taxon>
        <taxon>Enterobacteriaceae</taxon>
        <taxon>Escherichia</taxon>
    </lineage>
</organism>
<accession>A8A6J4</accession>
<name>ATPE_ECOHS</name>
<feature type="chain" id="PRO_1000060979" description="ATP synthase epsilon chain">
    <location>
        <begin position="1"/>
        <end position="139"/>
    </location>
</feature>
<evidence type="ECO:0000255" key="1">
    <source>
        <dbReference type="HAMAP-Rule" id="MF_00530"/>
    </source>
</evidence>
<proteinExistence type="inferred from homology"/>
<comment type="function">
    <text evidence="1">Produces ATP from ADP in the presence of a proton gradient across the membrane.</text>
</comment>
<comment type="subunit">
    <text evidence="1">F-type ATPases have 2 components, CF(1) - the catalytic core - and CF(0) - the membrane proton channel. CF(1) has five subunits: alpha(3), beta(3), gamma(1), delta(1), epsilon(1). CF(0) has three main subunits: a, b and c.</text>
</comment>
<comment type="subcellular location">
    <subcellularLocation>
        <location evidence="1">Cell inner membrane</location>
        <topology evidence="1">Peripheral membrane protein</topology>
    </subcellularLocation>
</comment>
<comment type="similarity">
    <text evidence="1">Belongs to the ATPase epsilon chain family.</text>
</comment>
<gene>
    <name evidence="1" type="primary">atpC</name>
    <name type="ordered locus">EcHS_A3947</name>
</gene>
<sequence length="139" mass="15068">MAMTYHLDVVSAEQQMFSGLVEKIQVTGSEGELGIYPGHAPLLTAIKPGMIRIVKQHGHEEFIYLSGGILEVQPGNVTVLADTAIRGQDLDEARAMEAKRKAEEHISSSHGDVDYAQASAELAKAIAQLRVIELTKKAM</sequence>
<protein>
    <recommendedName>
        <fullName evidence="1">ATP synthase epsilon chain</fullName>
    </recommendedName>
    <alternativeName>
        <fullName evidence="1">ATP synthase F1 sector epsilon subunit</fullName>
    </alternativeName>
    <alternativeName>
        <fullName evidence="1">F-ATPase epsilon subunit</fullName>
    </alternativeName>
</protein>
<reference key="1">
    <citation type="journal article" date="2008" name="J. Bacteriol.">
        <title>The pangenome structure of Escherichia coli: comparative genomic analysis of E. coli commensal and pathogenic isolates.</title>
        <authorList>
            <person name="Rasko D.A."/>
            <person name="Rosovitz M.J."/>
            <person name="Myers G.S.A."/>
            <person name="Mongodin E.F."/>
            <person name="Fricke W.F."/>
            <person name="Gajer P."/>
            <person name="Crabtree J."/>
            <person name="Sebaihia M."/>
            <person name="Thomson N.R."/>
            <person name="Chaudhuri R."/>
            <person name="Henderson I.R."/>
            <person name="Sperandio V."/>
            <person name="Ravel J."/>
        </authorList>
    </citation>
    <scope>NUCLEOTIDE SEQUENCE [LARGE SCALE GENOMIC DNA]</scope>
    <source>
        <strain>HS</strain>
    </source>
</reference>